<organism>
    <name type="scientific">Xanthomonas euvesicatoria pv. vesicatoria (strain 85-10)</name>
    <name type="common">Xanthomonas campestris pv. vesicatoria</name>
    <dbReference type="NCBI Taxonomy" id="316273"/>
    <lineage>
        <taxon>Bacteria</taxon>
        <taxon>Pseudomonadati</taxon>
        <taxon>Pseudomonadota</taxon>
        <taxon>Gammaproteobacteria</taxon>
        <taxon>Lysobacterales</taxon>
        <taxon>Lysobacteraceae</taxon>
        <taxon>Xanthomonas</taxon>
    </lineage>
</organism>
<keyword id="KW-0963">Cytoplasm</keyword>
<keyword id="KW-0378">Hydrolase</keyword>
<keyword id="KW-0479">Metal-binding</keyword>
<keyword id="KW-0547">Nucleotide-binding</keyword>
<accession>Q3BUS4</accession>
<proteinExistence type="inferred from homology"/>
<protein>
    <recommendedName>
        <fullName evidence="1">5'-nucleotidase SurE</fullName>
        <ecNumber evidence="1">3.1.3.5</ecNumber>
    </recommendedName>
    <alternativeName>
        <fullName evidence="1">Nucleoside 5'-monophosphate phosphohydrolase</fullName>
    </alternativeName>
</protein>
<reference key="1">
    <citation type="journal article" date="2005" name="J. Bacteriol.">
        <title>Insights into genome plasticity and pathogenicity of the plant pathogenic Bacterium Xanthomonas campestris pv. vesicatoria revealed by the complete genome sequence.</title>
        <authorList>
            <person name="Thieme F."/>
            <person name="Koebnik R."/>
            <person name="Bekel T."/>
            <person name="Berger C."/>
            <person name="Boch J."/>
            <person name="Buettner D."/>
            <person name="Caldana C."/>
            <person name="Gaigalat L."/>
            <person name="Goesmann A."/>
            <person name="Kay S."/>
            <person name="Kirchner O."/>
            <person name="Lanz C."/>
            <person name="Linke B."/>
            <person name="McHardy A.C."/>
            <person name="Meyer F."/>
            <person name="Mittenhuber G."/>
            <person name="Nies D.H."/>
            <person name="Niesbach-Kloesgen U."/>
            <person name="Patschkowski T."/>
            <person name="Rueckert C."/>
            <person name="Rupp O."/>
            <person name="Schneiker S."/>
            <person name="Schuster S.C."/>
            <person name="Vorhoelter F.J."/>
            <person name="Weber E."/>
            <person name="Puehler A."/>
            <person name="Bonas U."/>
            <person name="Bartels D."/>
            <person name="Kaiser O."/>
        </authorList>
    </citation>
    <scope>NUCLEOTIDE SEQUENCE [LARGE SCALE GENOMIC DNA]</scope>
    <source>
        <strain>85-10</strain>
    </source>
</reference>
<comment type="function">
    <text evidence="1">Nucleotidase that shows phosphatase activity on nucleoside 5'-monophosphates.</text>
</comment>
<comment type="catalytic activity">
    <reaction evidence="1">
        <text>a ribonucleoside 5'-phosphate + H2O = a ribonucleoside + phosphate</text>
        <dbReference type="Rhea" id="RHEA:12484"/>
        <dbReference type="ChEBI" id="CHEBI:15377"/>
        <dbReference type="ChEBI" id="CHEBI:18254"/>
        <dbReference type="ChEBI" id="CHEBI:43474"/>
        <dbReference type="ChEBI" id="CHEBI:58043"/>
        <dbReference type="EC" id="3.1.3.5"/>
    </reaction>
</comment>
<comment type="cofactor">
    <cofactor evidence="1">
        <name>a divalent metal cation</name>
        <dbReference type="ChEBI" id="CHEBI:60240"/>
    </cofactor>
    <text evidence="1">Binds 1 divalent metal cation per subunit.</text>
</comment>
<comment type="subcellular location">
    <subcellularLocation>
        <location evidence="1">Cytoplasm</location>
    </subcellularLocation>
</comment>
<comment type="similarity">
    <text evidence="1">Belongs to the SurE nucleotidase family.</text>
</comment>
<evidence type="ECO:0000255" key="1">
    <source>
        <dbReference type="HAMAP-Rule" id="MF_00060"/>
    </source>
</evidence>
<gene>
    <name evidence="1" type="primary">surE</name>
    <name type="ordered locus">XCV1758</name>
</gene>
<name>SURE_XANE5</name>
<feature type="chain" id="PRO_0000235670" description="5'-nucleotidase SurE">
    <location>
        <begin position="1"/>
        <end position="259"/>
    </location>
</feature>
<feature type="binding site" evidence="1">
    <location>
        <position position="8"/>
    </location>
    <ligand>
        <name>a divalent metal cation</name>
        <dbReference type="ChEBI" id="CHEBI:60240"/>
    </ligand>
</feature>
<feature type="binding site" evidence="1">
    <location>
        <position position="9"/>
    </location>
    <ligand>
        <name>a divalent metal cation</name>
        <dbReference type="ChEBI" id="CHEBI:60240"/>
    </ligand>
</feature>
<feature type="binding site" evidence="1">
    <location>
        <position position="40"/>
    </location>
    <ligand>
        <name>a divalent metal cation</name>
        <dbReference type="ChEBI" id="CHEBI:60240"/>
    </ligand>
</feature>
<feature type="binding site" evidence="1">
    <location>
        <position position="92"/>
    </location>
    <ligand>
        <name>a divalent metal cation</name>
        <dbReference type="ChEBI" id="CHEBI:60240"/>
    </ligand>
</feature>
<dbReference type="EC" id="3.1.3.5" evidence="1"/>
<dbReference type="EMBL" id="AM039952">
    <property type="protein sequence ID" value="CAJ23435.1"/>
    <property type="molecule type" value="Genomic_DNA"/>
</dbReference>
<dbReference type="RefSeq" id="WP_011347104.1">
    <property type="nucleotide sequence ID" value="NZ_CP017190.1"/>
</dbReference>
<dbReference type="SMR" id="Q3BUS4"/>
<dbReference type="STRING" id="456327.BJD11_13755"/>
<dbReference type="GeneID" id="97510100"/>
<dbReference type="KEGG" id="xcv:XCV1758"/>
<dbReference type="eggNOG" id="COG0496">
    <property type="taxonomic scope" value="Bacteria"/>
</dbReference>
<dbReference type="HOGENOM" id="CLU_045192_1_2_6"/>
<dbReference type="Proteomes" id="UP000007069">
    <property type="component" value="Chromosome"/>
</dbReference>
<dbReference type="GO" id="GO:0005737">
    <property type="term" value="C:cytoplasm"/>
    <property type="evidence" value="ECO:0007669"/>
    <property type="project" value="UniProtKB-SubCell"/>
</dbReference>
<dbReference type="GO" id="GO:0008254">
    <property type="term" value="F:3'-nucleotidase activity"/>
    <property type="evidence" value="ECO:0007669"/>
    <property type="project" value="TreeGrafter"/>
</dbReference>
<dbReference type="GO" id="GO:0008253">
    <property type="term" value="F:5'-nucleotidase activity"/>
    <property type="evidence" value="ECO:0007669"/>
    <property type="project" value="UniProtKB-UniRule"/>
</dbReference>
<dbReference type="GO" id="GO:0004309">
    <property type="term" value="F:exopolyphosphatase activity"/>
    <property type="evidence" value="ECO:0007669"/>
    <property type="project" value="TreeGrafter"/>
</dbReference>
<dbReference type="GO" id="GO:0046872">
    <property type="term" value="F:metal ion binding"/>
    <property type="evidence" value="ECO:0007669"/>
    <property type="project" value="UniProtKB-UniRule"/>
</dbReference>
<dbReference type="GO" id="GO:0000166">
    <property type="term" value="F:nucleotide binding"/>
    <property type="evidence" value="ECO:0007669"/>
    <property type="project" value="UniProtKB-KW"/>
</dbReference>
<dbReference type="FunFam" id="3.40.1210.10:FF:000001">
    <property type="entry name" value="5'/3'-nucleotidase SurE"/>
    <property type="match status" value="1"/>
</dbReference>
<dbReference type="Gene3D" id="3.40.1210.10">
    <property type="entry name" value="Survival protein SurE-like phosphatase/nucleotidase"/>
    <property type="match status" value="1"/>
</dbReference>
<dbReference type="HAMAP" id="MF_00060">
    <property type="entry name" value="SurE"/>
    <property type="match status" value="1"/>
</dbReference>
<dbReference type="InterPro" id="IPR030048">
    <property type="entry name" value="SurE"/>
</dbReference>
<dbReference type="InterPro" id="IPR002828">
    <property type="entry name" value="SurE-like_Pase/nucleotidase"/>
</dbReference>
<dbReference type="InterPro" id="IPR036523">
    <property type="entry name" value="SurE-like_sf"/>
</dbReference>
<dbReference type="NCBIfam" id="NF001489">
    <property type="entry name" value="PRK00346.1-3"/>
    <property type="match status" value="1"/>
</dbReference>
<dbReference type="NCBIfam" id="NF001490">
    <property type="entry name" value="PRK00346.1-4"/>
    <property type="match status" value="1"/>
</dbReference>
<dbReference type="NCBIfam" id="TIGR00087">
    <property type="entry name" value="surE"/>
    <property type="match status" value="1"/>
</dbReference>
<dbReference type="PANTHER" id="PTHR30457">
    <property type="entry name" value="5'-NUCLEOTIDASE SURE"/>
    <property type="match status" value="1"/>
</dbReference>
<dbReference type="PANTHER" id="PTHR30457:SF12">
    <property type="entry name" value="5'_3'-NUCLEOTIDASE SURE"/>
    <property type="match status" value="1"/>
</dbReference>
<dbReference type="Pfam" id="PF01975">
    <property type="entry name" value="SurE"/>
    <property type="match status" value="1"/>
</dbReference>
<dbReference type="SUPFAM" id="SSF64167">
    <property type="entry name" value="SurE-like"/>
    <property type="match status" value="1"/>
</dbReference>
<sequence length="259" mass="27377">MRVLVSNDDGVDAPGIQILAEALRHAGHEVMVVAPDRDRSGASNSLTLDVPIRTRRVDAQTCAVAGTPTDCVHLALTGMLDYDPDIVVSGINNSANLGDDVIYSGTVSAAMEGRFLGLPAVAVSLVTHNHQAHHYDTAARAAVEIVARLKADPLPADTILNVNVPDLAWSDVLGFEVTRLGNRHRSEPCVPQRDPRGRTVYWIGPAGPEQDAGAGTDFHAVRTGHISITPIHVDLTRYQALDTVAGWVGGLTAALDGPA</sequence>